<accession>Q7Z404</accession>
<accession>Q7Z5M3</accession>
<accession>Q8N5E4</accession>
<accession>Q8TBS7</accession>
<organism>
    <name type="scientific">Homo sapiens</name>
    <name type="common">Human</name>
    <dbReference type="NCBI Taxonomy" id="9606"/>
    <lineage>
        <taxon>Eukaryota</taxon>
        <taxon>Metazoa</taxon>
        <taxon>Chordata</taxon>
        <taxon>Craniata</taxon>
        <taxon>Vertebrata</taxon>
        <taxon>Euteleostomi</taxon>
        <taxon>Mammalia</taxon>
        <taxon>Eutheria</taxon>
        <taxon>Euarchontoglires</taxon>
        <taxon>Primates</taxon>
        <taxon>Haplorrhini</taxon>
        <taxon>Catarrhini</taxon>
        <taxon>Hominidae</taxon>
        <taxon>Homo</taxon>
    </lineage>
</organism>
<name>TMC4_HUMAN</name>
<comment type="function">
    <text evidence="4 5">Voltage-gated chloride channel involved in high-concentration salt taste sensation (PubMed:34429071, PubMed:34468713). Depolarization induced by high NaCl concentration may trigger the activation of TMC4-mediated chloride influx into taste bud cells, helping the return to resting potential (PubMed:34429071). Also allows permeation of organic anions including gluconate, but their current amplitudes at positive potentials are less than that of chloride (PubMed:34429071). Involved in pH and temperature-dependent modulation of salty taste (PubMed:34468713).</text>
</comment>
<comment type="catalytic activity">
    <reaction evidence="4 5">
        <text>chloride(in) = chloride(out)</text>
        <dbReference type="Rhea" id="RHEA:29823"/>
        <dbReference type="ChEBI" id="CHEBI:17996"/>
    </reaction>
</comment>
<comment type="biophysicochemical properties">
    <phDependence>
        <text evidence="5">Optimum pH is 7.4 for chloride transport activity. Transport activity is suppressed at pH 5.5.</text>
    </phDependence>
    <temperatureDependence>
        <text evidence="5">Optimum temperature is approximately 40 degrees Celsius for chloride transport activity. Transport activity is decreased at higher and lower temperatures.</text>
    </temperatureDependence>
</comment>
<comment type="interaction">
    <interactant intactId="EBI-23725088">
        <id>Q7Z404-3</id>
    </interactant>
    <interactant intactId="EBI-12070086">
        <id>Q5J8X5</id>
        <label>MS4A13</label>
    </interactant>
    <organismsDiffer>false</organismsDiffer>
    <experiments>3</experiments>
</comment>
<comment type="interaction">
    <interactant intactId="EBI-23725088">
        <id>Q7Z404-3</id>
    </interactant>
    <interactant intactId="EBI-11988865">
        <id>A5PKU2</id>
        <label>TUSC5</label>
    </interactant>
    <organismsDiffer>false</organismsDiffer>
    <experiments>3</experiments>
</comment>
<comment type="subcellular location">
    <subcellularLocation>
        <location evidence="9">Membrane</location>
        <topology evidence="9">Multi-pass membrane protein</topology>
    </subcellularLocation>
</comment>
<comment type="alternative products">
    <event type="alternative splicing"/>
    <isoform>
        <id>Q7Z404-2</id>
        <name>1</name>
        <sequence type="displayed"/>
    </isoform>
    <isoform>
        <id>Q7Z404-1</id>
        <name>2</name>
        <sequence type="described" ref="VSP_026012"/>
    </isoform>
    <isoform>
        <id>Q7Z404-3</id>
        <name>3</name>
        <sequence type="described" ref="VSP_026011 VSP_026013"/>
    </isoform>
</comment>
<comment type="similarity">
    <text evidence="9">Belongs to the TMC family.</text>
</comment>
<dbReference type="EMBL" id="AY263166">
    <property type="protein sequence ID" value="AAP78781.1"/>
    <property type="molecule type" value="mRNA"/>
</dbReference>
<dbReference type="EMBL" id="AY236492">
    <property type="protein sequence ID" value="AAP69870.1"/>
    <property type="molecule type" value="mRNA"/>
</dbReference>
<dbReference type="EMBL" id="AC012314">
    <property type="status" value="NOT_ANNOTATED_CDS"/>
    <property type="molecule type" value="Genomic_DNA"/>
</dbReference>
<dbReference type="EMBL" id="BC025323">
    <property type="protein sequence ID" value="AAH25323.1"/>
    <property type="molecule type" value="mRNA"/>
</dbReference>
<dbReference type="EMBL" id="BC032477">
    <property type="protein sequence ID" value="AAH32477.1"/>
    <property type="molecule type" value="mRNA"/>
</dbReference>
<dbReference type="CCDS" id="CCDS12882.1">
    <molecule id="Q7Z404-1"/>
</dbReference>
<dbReference type="CCDS" id="CCDS46174.1">
    <molecule id="Q7Z404-2"/>
</dbReference>
<dbReference type="RefSeq" id="NP_001138775.2">
    <property type="nucleotide sequence ID" value="NM_001145303.2"/>
</dbReference>
<dbReference type="RefSeq" id="NP_653287.2">
    <property type="nucleotide sequence ID" value="NM_144686.3"/>
</dbReference>
<dbReference type="SMR" id="Q7Z404"/>
<dbReference type="BioGRID" id="127088">
    <property type="interactions" value="58"/>
</dbReference>
<dbReference type="FunCoup" id="Q7Z404">
    <property type="interactions" value="56"/>
</dbReference>
<dbReference type="IntAct" id="Q7Z404">
    <property type="interactions" value="29"/>
</dbReference>
<dbReference type="STRING" id="9606.ENSP00000477627"/>
<dbReference type="TCDB" id="1.A.17.4.14">
    <property type="family name" value="the calcium-dependent chloride channel (ca-clc) family"/>
</dbReference>
<dbReference type="GlyCosmos" id="Q7Z404">
    <property type="glycosylation" value="1 site, No reported glycans"/>
</dbReference>
<dbReference type="GlyGen" id="Q7Z404">
    <property type="glycosylation" value="1 site"/>
</dbReference>
<dbReference type="iPTMnet" id="Q7Z404"/>
<dbReference type="PhosphoSitePlus" id="Q7Z404"/>
<dbReference type="SwissPalm" id="Q7Z404"/>
<dbReference type="BioMuta" id="TMC4"/>
<dbReference type="DMDM" id="296452937"/>
<dbReference type="jPOST" id="Q7Z404"/>
<dbReference type="MassIVE" id="Q7Z404"/>
<dbReference type="PaxDb" id="9606-ENSP00000477627"/>
<dbReference type="PeptideAtlas" id="Q7Z404"/>
<dbReference type="ProteomicsDB" id="69110">
    <molecule id="Q7Z404-2"/>
</dbReference>
<dbReference type="ProteomicsDB" id="69111">
    <molecule id="Q7Z404-1"/>
</dbReference>
<dbReference type="ProteomicsDB" id="69112">
    <molecule id="Q7Z404-3"/>
</dbReference>
<dbReference type="DNASU" id="147798"/>
<dbReference type="Ensembl" id="ENST00000618950.4">
    <molecule id="Q7Z404-2"/>
    <property type="protein sequence ID" value="ENSP00000478046.1"/>
    <property type="gene ID" value="ENSG00000273722.4"/>
</dbReference>
<dbReference type="Ensembl" id="ENST00000621671.4">
    <molecule id="Q7Z404-1"/>
    <property type="protein sequence ID" value="ENSP00000481629.1"/>
    <property type="gene ID" value="ENSG00000273722.4"/>
</dbReference>
<dbReference type="GeneID" id="147798"/>
<dbReference type="KEGG" id="hsa:147798"/>
<dbReference type="UCSC" id="uc032iss.2">
    <molecule id="Q7Z404-2"/>
    <property type="organism name" value="human"/>
</dbReference>
<dbReference type="AGR" id="HGNC:22998"/>
<dbReference type="CTD" id="147798"/>
<dbReference type="DisGeNET" id="147798"/>
<dbReference type="GeneCards" id="TMC4"/>
<dbReference type="HGNC" id="HGNC:22998">
    <property type="gene designation" value="TMC4"/>
</dbReference>
<dbReference type="MalaCards" id="TMC4"/>
<dbReference type="neXtProt" id="NX_Q7Z404"/>
<dbReference type="PharmGKB" id="PA134874063"/>
<dbReference type="eggNOG" id="ENOG502S3W0">
    <property type="taxonomic scope" value="Eukaryota"/>
</dbReference>
<dbReference type="InParanoid" id="Q7Z404"/>
<dbReference type="OrthoDB" id="1936208at2759"/>
<dbReference type="PAN-GO" id="Q7Z404">
    <property type="GO annotations" value="1 GO annotation based on evolutionary models"/>
</dbReference>
<dbReference type="PhylomeDB" id="Q7Z404"/>
<dbReference type="TreeFam" id="TF313462"/>
<dbReference type="PathwayCommons" id="Q7Z404"/>
<dbReference type="SignaLink" id="Q7Z404"/>
<dbReference type="BioGRID-ORCS" id="147798">
    <property type="hits" value="14 hits in 1148 CRISPR screens"/>
</dbReference>
<dbReference type="ChiTaRS" id="TMC4">
    <property type="organism name" value="human"/>
</dbReference>
<dbReference type="GenomeRNAi" id="147798"/>
<dbReference type="Pharos" id="Q7Z404">
    <property type="development level" value="Tdark"/>
</dbReference>
<dbReference type="PRO" id="PR:Q7Z404"/>
<dbReference type="Proteomes" id="UP000005640">
    <property type="component" value="Unplaced"/>
</dbReference>
<dbReference type="RNAct" id="Q7Z404">
    <property type="molecule type" value="protein"/>
</dbReference>
<dbReference type="GO" id="GO:0070062">
    <property type="term" value="C:extracellular exosome"/>
    <property type="evidence" value="ECO:0007005"/>
    <property type="project" value="UniProtKB"/>
</dbReference>
<dbReference type="GO" id="GO:0005886">
    <property type="term" value="C:plasma membrane"/>
    <property type="evidence" value="ECO:0007669"/>
    <property type="project" value="InterPro"/>
</dbReference>
<dbReference type="GO" id="GO:0008381">
    <property type="term" value="F:mechanosensitive monoatomic ion channel activity"/>
    <property type="evidence" value="ECO:0000318"/>
    <property type="project" value="GO_Central"/>
</dbReference>
<dbReference type="GO" id="GO:0005247">
    <property type="term" value="F:voltage-gated chloride channel activity"/>
    <property type="evidence" value="ECO:0000314"/>
    <property type="project" value="UniProtKB"/>
</dbReference>
<dbReference type="InterPro" id="IPR038900">
    <property type="entry name" value="TMC"/>
</dbReference>
<dbReference type="InterPro" id="IPR012496">
    <property type="entry name" value="TMC_dom"/>
</dbReference>
<dbReference type="PANTHER" id="PTHR23302:SF45">
    <property type="entry name" value="TRANSMEMBRANE CHANNEL-LIKE PROTEIN 4"/>
    <property type="match status" value="1"/>
</dbReference>
<dbReference type="PANTHER" id="PTHR23302">
    <property type="entry name" value="TRANSMEMBRANE CHANNEL-RELATED"/>
    <property type="match status" value="1"/>
</dbReference>
<dbReference type="Pfam" id="PF07810">
    <property type="entry name" value="TMC"/>
    <property type="match status" value="1"/>
</dbReference>
<gene>
    <name evidence="10" type="primary">TMC4</name>
</gene>
<keyword id="KW-0025">Alternative splicing</keyword>
<keyword id="KW-0325">Glycoprotein</keyword>
<keyword id="KW-0407">Ion channel</keyword>
<keyword id="KW-0406">Ion transport</keyword>
<keyword id="KW-0472">Membrane</keyword>
<keyword id="KW-1267">Proteomics identification</keyword>
<keyword id="KW-1185">Reference proteome</keyword>
<keyword id="KW-0812">Transmembrane</keyword>
<keyword id="KW-1133">Transmembrane helix</keyword>
<keyword id="KW-0813">Transport</keyword>
<reference key="1">
    <citation type="journal article" date="2003" name="BMC Genomics">
        <title>TMC and EVER genes belong to a larger novel family, the TMC gene family encoding transmembrane proteins.</title>
        <authorList>
            <person name="Keresztes G."/>
            <person name="Mutai H."/>
            <person name="Heller S."/>
        </authorList>
    </citation>
    <scope>NUCLEOTIDE SEQUENCE [MRNA] (ISOFORM 2)</scope>
    <scope>VARIANT GLU-17</scope>
</reference>
<reference key="2">
    <citation type="journal article" date="2003" name="Genomics">
        <title>Characterization of the transmembrane channel-like (TMC) gene family: functional clues from hearing loss and epidermodysplasia verruciformis.</title>
        <authorList>
            <person name="Kurima K."/>
            <person name="Yang Y."/>
            <person name="Sorber K."/>
            <person name="Griffith A.J."/>
        </authorList>
    </citation>
    <scope>NUCLEOTIDE SEQUENCE [MRNA] (ISOFORM 1)</scope>
</reference>
<reference key="3">
    <citation type="journal article" date="2004" name="Nature">
        <title>The DNA sequence and biology of human chromosome 19.</title>
        <authorList>
            <person name="Grimwood J."/>
            <person name="Gordon L.A."/>
            <person name="Olsen A.S."/>
            <person name="Terry A."/>
            <person name="Schmutz J."/>
            <person name="Lamerdin J.E."/>
            <person name="Hellsten U."/>
            <person name="Goodstein D."/>
            <person name="Couronne O."/>
            <person name="Tran-Gyamfi M."/>
            <person name="Aerts A."/>
            <person name="Altherr M."/>
            <person name="Ashworth L."/>
            <person name="Bajorek E."/>
            <person name="Black S."/>
            <person name="Branscomb E."/>
            <person name="Caenepeel S."/>
            <person name="Carrano A.V."/>
            <person name="Caoile C."/>
            <person name="Chan Y.M."/>
            <person name="Christensen M."/>
            <person name="Cleland C.A."/>
            <person name="Copeland A."/>
            <person name="Dalin E."/>
            <person name="Dehal P."/>
            <person name="Denys M."/>
            <person name="Detter J.C."/>
            <person name="Escobar J."/>
            <person name="Flowers D."/>
            <person name="Fotopulos D."/>
            <person name="Garcia C."/>
            <person name="Georgescu A.M."/>
            <person name="Glavina T."/>
            <person name="Gomez M."/>
            <person name="Gonzales E."/>
            <person name="Groza M."/>
            <person name="Hammon N."/>
            <person name="Hawkins T."/>
            <person name="Haydu L."/>
            <person name="Ho I."/>
            <person name="Huang W."/>
            <person name="Israni S."/>
            <person name="Jett J."/>
            <person name="Kadner K."/>
            <person name="Kimball H."/>
            <person name="Kobayashi A."/>
            <person name="Larionov V."/>
            <person name="Leem S.-H."/>
            <person name="Lopez F."/>
            <person name="Lou Y."/>
            <person name="Lowry S."/>
            <person name="Malfatti S."/>
            <person name="Martinez D."/>
            <person name="McCready P.M."/>
            <person name="Medina C."/>
            <person name="Morgan J."/>
            <person name="Nelson K."/>
            <person name="Nolan M."/>
            <person name="Ovcharenko I."/>
            <person name="Pitluck S."/>
            <person name="Pollard M."/>
            <person name="Popkie A.P."/>
            <person name="Predki P."/>
            <person name="Quan G."/>
            <person name="Ramirez L."/>
            <person name="Rash S."/>
            <person name="Retterer J."/>
            <person name="Rodriguez A."/>
            <person name="Rogers S."/>
            <person name="Salamov A."/>
            <person name="Salazar A."/>
            <person name="She X."/>
            <person name="Smith D."/>
            <person name="Slezak T."/>
            <person name="Solovyev V."/>
            <person name="Thayer N."/>
            <person name="Tice H."/>
            <person name="Tsai M."/>
            <person name="Ustaszewska A."/>
            <person name="Vo N."/>
            <person name="Wagner M."/>
            <person name="Wheeler J."/>
            <person name="Wu K."/>
            <person name="Xie G."/>
            <person name="Yang J."/>
            <person name="Dubchak I."/>
            <person name="Furey T.S."/>
            <person name="DeJong P."/>
            <person name="Dickson M."/>
            <person name="Gordon D."/>
            <person name="Eichler E.E."/>
            <person name="Pennacchio L.A."/>
            <person name="Richardson P."/>
            <person name="Stubbs L."/>
            <person name="Rokhsar D.S."/>
            <person name="Myers R.M."/>
            <person name="Rubin E.M."/>
            <person name="Lucas S.M."/>
        </authorList>
    </citation>
    <scope>NUCLEOTIDE SEQUENCE [LARGE SCALE GENOMIC DNA]</scope>
</reference>
<reference key="4">
    <citation type="journal article" date="2004" name="Genome Res.">
        <title>The status, quality, and expansion of the NIH full-length cDNA project: the Mammalian Gene Collection (MGC).</title>
        <authorList>
            <consortium name="The MGC Project Team"/>
        </authorList>
    </citation>
    <scope>NUCLEOTIDE SEQUENCE [LARGE SCALE MRNA] (ISOFORMS 2 AND 3)</scope>
    <source>
        <tissue>Blood</tissue>
        <tissue>Colon</tissue>
    </source>
</reference>
<reference key="5">
    <citation type="journal article" date="2021" name="Biosci. Biotechnol. Biochem.">
        <title>Transmembrane channel-like 4 is involved in pH and temperature-dependent modulation of salty taste.</title>
        <authorList>
            <person name="Kasahara Y."/>
            <person name="Narukawa M."/>
            <person name="Kanda S."/>
            <person name="Tominaga M."/>
            <person name="Abe K."/>
            <person name="Misaka T."/>
            <person name="Asakura T."/>
        </authorList>
    </citation>
    <scope>FUNCTION</scope>
    <scope>BIOPHYSICOCHEMICAL PROPERTIES</scope>
    <scope>TRANSPORTER ACTIVITY</scope>
</reference>
<reference key="6">
    <citation type="journal article" date="2021" name="J. Physiol. Sci.">
        <title>TMC4 is a novel chloride channel involved in high-concentration salt taste sensation.</title>
        <authorList>
            <person name="Kasahara Y."/>
            <person name="Narukawa M."/>
            <person name="Ishimaru Y."/>
            <person name="Kanda S."/>
            <person name="Umatani C."/>
            <person name="Takayama Y."/>
            <person name="Tominaga M."/>
            <person name="Oka Y."/>
            <person name="Kondo K."/>
            <person name="Kondo T."/>
            <person name="Takeuchi A."/>
            <person name="Misaka T."/>
            <person name="Abe K."/>
            <person name="Asakura T."/>
        </authorList>
    </citation>
    <scope>FUNCTION</scope>
    <scope>TRANSPORTER ACTIVITY</scope>
</reference>
<evidence type="ECO:0000255" key="1"/>
<evidence type="ECO:0000256" key="2">
    <source>
        <dbReference type="SAM" id="MobiDB-lite"/>
    </source>
</evidence>
<evidence type="ECO:0000269" key="3">
    <source>
    </source>
</evidence>
<evidence type="ECO:0000269" key="4">
    <source>
    </source>
</evidence>
<evidence type="ECO:0000269" key="5">
    <source>
    </source>
</evidence>
<evidence type="ECO:0000303" key="6">
    <source>
    </source>
</evidence>
<evidence type="ECO:0000303" key="7">
    <source>
    </source>
</evidence>
<evidence type="ECO:0000303" key="8">
    <source>
    </source>
</evidence>
<evidence type="ECO:0000305" key="9"/>
<evidence type="ECO:0000312" key="10">
    <source>
        <dbReference type="HGNC" id="HGNC:22998"/>
    </source>
</evidence>
<protein>
    <recommendedName>
        <fullName>Voltage-gated chloride channel TMC4</fullName>
    </recommendedName>
    <alternativeName>
        <fullName evidence="8">Transmembrane channel-like protein 4</fullName>
    </alternativeName>
</protein>
<feature type="chain" id="PRO_0000289468" description="Voltage-gated chloride channel TMC4">
    <location>
        <begin position="1"/>
        <end position="712"/>
    </location>
</feature>
<feature type="topological domain" description="Extracellular" evidence="1">
    <location>
        <begin position="1"/>
        <end position="168"/>
    </location>
</feature>
<feature type="transmembrane region" description="Helical" evidence="1">
    <location>
        <begin position="169"/>
        <end position="189"/>
    </location>
</feature>
<feature type="topological domain" description="Cytoplasmic" evidence="1">
    <location>
        <begin position="190"/>
        <end position="249"/>
    </location>
</feature>
<feature type="transmembrane region" description="Helical" evidence="1">
    <location>
        <begin position="250"/>
        <end position="270"/>
    </location>
</feature>
<feature type="topological domain" description="Extracellular" evidence="1">
    <location>
        <begin position="271"/>
        <end position="348"/>
    </location>
</feature>
<feature type="transmembrane region" description="Helical" evidence="1">
    <location>
        <begin position="349"/>
        <end position="369"/>
    </location>
</feature>
<feature type="topological domain" description="Cytoplasmic" evidence="1">
    <location>
        <begin position="370"/>
        <end position="394"/>
    </location>
</feature>
<feature type="transmembrane region" description="Helical" evidence="1">
    <location>
        <begin position="395"/>
        <end position="415"/>
    </location>
</feature>
<feature type="topological domain" description="Extracellular" evidence="1">
    <location>
        <begin position="416"/>
        <end position="425"/>
    </location>
</feature>
<feature type="transmembrane region" description="Helical" evidence="1">
    <location>
        <begin position="426"/>
        <end position="446"/>
    </location>
</feature>
<feature type="topological domain" description="Cytoplasmic" evidence="1">
    <location>
        <begin position="447"/>
        <end position="483"/>
    </location>
</feature>
<feature type="transmembrane region" description="Helical" evidence="1">
    <location>
        <begin position="484"/>
        <end position="504"/>
    </location>
</feature>
<feature type="topological domain" description="Extracellular" evidence="1">
    <location>
        <begin position="505"/>
        <end position="542"/>
    </location>
</feature>
<feature type="transmembrane region" description="Helical" evidence="1">
    <location>
        <begin position="543"/>
        <end position="565"/>
    </location>
</feature>
<feature type="topological domain" description="Cytoplasmic" evidence="1">
    <location>
        <begin position="566"/>
        <end position="592"/>
    </location>
</feature>
<feature type="transmembrane region" description="Helical" evidence="1">
    <location>
        <begin position="593"/>
        <end position="613"/>
    </location>
</feature>
<feature type="topological domain" description="Extracellular" evidence="1">
    <location>
        <begin position="614"/>
        <end position="654"/>
    </location>
</feature>
<feature type="transmembrane region" description="Helical" evidence="1">
    <location>
        <begin position="655"/>
        <end position="677"/>
    </location>
</feature>
<feature type="topological domain" description="Cytoplasmic" evidence="1">
    <location>
        <begin position="678"/>
        <end position="712"/>
    </location>
</feature>
<feature type="region of interest" description="Disordered" evidence="2">
    <location>
        <begin position="1"/>
        <end position="39"/>
    </location>
</feature>
<feature type="glycosylation site" description="N-linked (GlcNAc...) asparagine" evidence="1">
    <location>
        <position position="107"/>
    </location>
</feature>
<feature type="splice variant" id="VSP_026011" description="In isoform 3." evidence="7">
    <location>
        <begin position="1"/>
        <end position="418"/>
    </location>
</feature>
<feature type="splice variant" id="VSP_026012" description="In isoform 2." evidence="6 7">
    <location>
        <begin position="27"/>
        <end position="32"/>
    </location>
</feature>
<feature type="splice variant" id="VSP_026013" description="In isoform 3." evidence="7">
    <original>GYTRSRQIVFILL</original>
    <variation>MKGGGGQRDVGAD</variation>
    <location>
        <begin position="419"/>
        <end position="431"/>
    </location>
</feature>
<feature type="sequence variant" id="VAR_032621" description="In dbSNP:rs641738." evidence="3">
    <original>G</original>
    <variation>E</variation>
    <location>
        <position position="17"/>
    </location>
</feature>
<feature type="sequence variant" id="VAR_032622" description="In dbSNP:rs36657.">
    <original>Q</original>
    <variation>E</variation>
    <location>
        <position position="689"/>
    </location>
</feature>
<feature type="sequence conflict" description="In Ref. 1; AAP78781." evidence="9" ref="1">
    <original>K</original>
    <variation>Q</variation>
    <location>
        <position position="321"/>
    </location>
</feature>
<feature type="sequence conflict" description="In Ref. 2; AAP69870." evidence="9" ref="2">
    <original>S</original>
    <variation>P</variation>
    <location>
        <position position="397"/>
    </location>
</feature>
<feature type="sequence conflict" description="In Ref. 1; AAP78781." evidence="9" ref="1">
    <original>L</original>
    <variation>V</variation>
    <location>
        <position position="569"/>
    </location>
</feature>
<feature type="sequence conflict" description="In Ref. 2; AAP69870." evidence="9" ref="2">
    <original>T</original>
    <variation>A</variation>
    <location>
        <position position="642"/>
    </location>
</feature>
<sequence>MEENPTLESEAWGSSRGWLAPREARGAPCSSPGPSLSSVLNELPSAATLRYRDPGVLPWGALEEEEEDGGRSRKAFTEVTQTELQDPHPSRELPWPMQARRAHRQRNASRDQVVYGSGTKTDRWARLLRRSKEKTKEGLRSLQPWAWTLKRIGGQFGAGTESYFSLLRFLLLLNVLASVLMACMTLLPTWLGGAPPGPPGPDISSPCGSYNPHSQGLVTFATQLFNLLSGEGYLEWSPLFYGFYPPRPRLAVTYLCWAFAVGLICLLLILHRSVSGLKQTLLAESEALTSYSHRVFSAWDFGLCGDVHVRLRQRIILYELKVELEETVVRRQAAVRTLGQQARVWLVRVLLNLLVVALLGAAFYGVYWATGCTVELQEMPLVQELPLLKLGVNYLPSIFIAGVNFVLPPVFKLIAPLEGYTRSRQIVFILLRTVFLRLASLVVLLFSLWNQITCGGDSEAEDCKTCGYNYKQLPCWETVLGQEMYKLLLFDLLTVLAVALLIQFPRKLLCGLCPGALGRLAGTQEFQVPDEVLGLIYAQTVVWVGSFFCPLLPLLNTVKFLLLFYLKKLTLFSTCSPAARTFRASAANFFFPLVLLLGLAISSVPLLYSIFLIPPSKLCGPFRGQSSIWAQIPESISSLPETTQNFLFFLGTQAFAVPLLLISSILMAYTVALANSYGRLISELKRQRQTEAQNKVFLARRAVALTSTKPAL</sequence>
<proteinExistence type="evidence at protein level"/>